<organism>
    <name type="scientific">Methylococcus capsulatus (strain ATCC 33009 / NCIMB 11132 / Bath)</name>
    <dbReference type="NCBI Taxonomy" id="243233"/>
    <lineage>
        <taxon>Bacteria</taxon>
        <taxon>Pseudomonadati</taxon>
        <taxon>Pseudomonadota</taxon>
        <taxon>Gammaproteobacteria</taxon>
        <taxon>Methylococcales</taxon>
        <taxon>Methylococcaceae</taxon>
        <taxon>Methylococcus</taxon>
    </lineage>
</organism>
<evidence type="ECO:0000255" key="1"/>
<evidence type="ECO:0000269" key="2">
    <source>
    </source>
</evidence>
<evidence type="ECO:0000269" key="3">
    <source>
    </source>
</evidence>
<evidence type="ECO:0000269" key="4">
    <source>
    </source>
</evidence>
<evidence type="ECO:0000269" key="5">
    <source>
    </source>
</evidence>
<evidence type="ECO:0000269" key="6">
    <source>
    </source>
</evidence>
<evidence type="ECO:0000269" key="7">
    <source>
    </source>
</evidence>
<evidence type="ECO:0000269" key="8">
    <source>
    </source>
</evidence>
<evidence type="ECO:0000269" key="9">
    <source>
    </source>
</evidence>
<evidence type="ECO:0000269" key="10">
    <source>
    </source>
</evidence>
<evidence type="ECO:0000269" key="11">
    <source>
    </source>
</evidence>
<evidence type="ECO:0000305" key="12"/>
<evidence type="ECO:0007744" key="13">
    <source>
        <dbReference type="PDB" id="1YEW"/>
    </source>
</evidence>
<evidence type="ECO:0007744" key="14">
    <source>
        <dbReference type="PDB" id="3RGB"/>
    </source>
</evidence>
<evidence type="ECO:0007829" key="15">
    <source>
        <dbReference type="PDB" id="7S4H"/>
    </source>
</evidence>
<evidence type="ECO:0007829" key="16">
    <source>
        <dbReference type="PDB" id="8SR4"/>
    </source>
</evidence>
<protein>
    <recommendedName>
        <fullName>Particulate methane monooxygenase alpha subunit</fullName>
        <ecNumber>1.14.18.3</ecNumber>
    </recommendedName>
    <alternativeName>
        <fullName>Methane monooxygenase B subunit</fullName>
    </alternativeName>
    <alternativeName>
        <fullName>Particulate methane monooxygenase 45 kDa subunit</fullName>
    </alternativeName>
    <alternativeName>
        <fullName>Particulate methane monooxygenase 47 kDa subunit</fullName>
    </alternativeName>
    <alternativeName>
        <fullName>Particulate methane monooxygenase hydroxylase 45 kDa subunit</fullName>
    </alternativeName>
    <alternativeName>
        <fullName>Particulate methane monooxygenase hydroxylase alpha subunit</fullName>
        <shortName>pMMO-H alpha subunit</shortName>
    </alternativeName>
</protein>
<gene>
    <name type="primary">pmoB1</name>
    <name type="synonym">pmoB</name>
    <name type="ordered locus">MCA1796</name>
</gene>
<gene>
    <name type="primary">pmoB2</name>
    <name type="ordered locus">MCA2853</name>
</gene>
<feature type="signal peptide" evidence="10 11">
    <location>
        <begin position="1"/>
        <end position="32"/>
    </location>
</feature>
<feature type="chain" id="PRO_5000142832" description="Particulate methane monooxygenase alpha subunit">
    <location>
        <begin position="33"/>
        <end position="414"/>
    </location>
</feature>
<feature type="transmembrane region" description="Helical" evidence="1">
    <location>
        <begin position="186"/>
        <end position="206"/>
    </location>
</feature>
<feature type="transmembrane region" description="Helical" evidence="1">
    <location>
        <begin position="235"/>
        <end position="255"/>
    </location>
</feature>
<feature type="region of interest" description="Cupredoxin domain used to construct soluble pmoB (spmoB)">
    <location>
        <begin position="33"/>
        <end position="172"/>
    </location>
</feature>
<feature type="region of interest" description="Cupredoxin domain used to construct soluble pmoB (spmoB)">
    <location>
        <begin position="265"/>
        <end position="414"/>
    </location>
</feature>
<feature type="binding site" evidence="4 8 13 14">
    <location>
        <position position="33"/>
    </location>
    <ligand>
        <name>Cu cation</name>
        <dbReference type="ChEBI" id="CHEBI:23378"/>
        <label>1</label>
    </ligand>
</feature>
<feature type="binding site" evidence="4 8 13 14">
    <location>
        <position position="48"/>
    </location>
    <ligand>
        <name>Cu cation</name>
        <dbReference type="ChEBI" id="CHEBI:23378"/>
        <label>2</label>
    </ligand>
</feature>
<feature type="binding site" evidence="4 8 13 14">
    <location>
        <position position="72"/>
    </location>
    <ligand>
        <name>Cu cation</name>
        <dbReference type="ChEBI" id="CHEBI:23378"/>
        <label>2</label>
    </ligand>
</feature>
<feature type="binding site" evidence="4 8 13 14">
    <location>
        <position position="137"/>
    </location>
    <ligand>
        <name>Cu cation</name>
        <dbReference type="ChEBI" id="CHEBI:23378"/>
        <label>3</label>
    </ligand>
</feature>
<feature type="binding site" evidence="4 8 13 14">
    <location>
        <position position="139"/>
    </location>
    <ligand>
        <name>Cu cation</name>
        <dbReference type="ChEBI" id="CHEBI:23378"/>
        <label>1</label>
    </ligand>
</feature>
<feature type="binding site" evidence="4 8 13 14">
    <location>
        <position position="139"/>
    </location>
    <ligand>
        <name>Cu cation</name>
        <dbReference type="ChEBI" id="CHEBI:23378"/>
        <label>3</label>
    </ligand>
</feature>
<feature type="mutagenesis site" description="Impairs activity of soluble pmoB construct." evidence="7">
    <original>H</original>
    <variation>N</variation>
    <location>
        <position position="48"/>
    </location>
</feature>
<feature type="mutagenesis site" description="Abolishes activity of soluble pmoB construct; when associated with A-139." evidence="7">
    <original>H</original>
    <variation>A</variation>
    <location>
        <position position="137"/>
    </location>
</feature>
<feature type="mutagenesis site" description="Abolishes activity of soluble pmoB construct; when associated with A-137." evidence="7">
    <original>H</original>
    <variation>A</variation>
    <location>
        <position position="139"/>
    </location>
</feature>
<feature type="strand" evidence="15">
    <location>
        <begin position="36"/>
        <end position="38"/>
    </location>
</feature>
<feature type="helix" evidence="15">
    <location>
        <begin position="40"/>
        <end position="44"/>
    </location>
</feature>
<feature type="strand" evidence="15">
    <location>
        <begin position="46"/>
        <end position="55"/>
    </location>
</feature>
<feature type="strand" evidence="15">
    <location>
        <begin position="57"/>
        <end position="60"/>
    </location>
</feature>
<feature type="strand" evidence="15">
    <location>
        <begin position="64"/>
        <end position="73"/>
    </location>
</feature>
<feature type="strand" evidence="15">
    <location>
        <begin position="86"/>
        <end position="95"/>
    </location>
</feature>
<feature type="strand" evidence="15">
    <location>
        <begin position="98"/>
        <end position="105"/>
    </location>
</feature>
<feature type="strand" evidence="15">
    <location>
        <begin position="121"/>
        <end position="130"/>
    </location>
</feature>
<feature type="strand" evidence="15">
    <location>
        <begin position="134"/>
        <end position="144"/>
    </location>
</feature>
<feature type="turn" evidence="15">
    <location>
        <begin position="145"/>
        <end position="147"/>
    </location>
</feature>
<feature type="strand" evidence="15">
    <location>
        <begin position="148"/>
        <end position="161"/>
    </location>
</feature>
<feature type="helix" evidence="15">
    <location>
        <begin position="163"/>
        <end position="165"/>
    </location>
</feature>
<feature type="strand" evidence="15">
    <location>
        <begin position="169"/>
        <end position="172"/>
    </location>
</feature>
<feature type="strand" evidence="15">
    <location>
        <begin position="177"/>
        <end position="179"/>
    </location>
</feature>
<feature type="turn" evidence="15">
    <location>
        <begin position="180"/>
        <end position="184"/>
    </location>
</feature>
<feature type="helix" evidence="15">
    <location>
        <begin position="185"/>
        <end position="207"/>
    </location>
</feature>
<feature type="helix" evidence="15">
    <location>
        <begin position="213"/>
        <end position="220"/>
    </location>
</feature>
<feature type="strand" evidence="15">
    <location>
        <begin position="226"/>
        <end position="228"/>
    </location>
</feature>
<feature type="helix" evidence="15">
    <location>
        <begin position="232"/>
        <end position="256"/>
    </location>
</feature>
<feature type="strand" evidence="15">
    <location>
        <begin position="281"/>
        <end position="294"/>
    </location>
</feature>
<feature type="strand" evidence="15">
    <location>
        <begin position="296"/>
        <end position="306"/>
    </location>
</feature>
<feature type="strand" evidence="15">
    <location>
        <begin position="308"/>
        <end position="310"/>
    </location>
</feature>
<feature type="strand" evidence="15">
    <location>
        <begin position="312"/>
        <end position="321"/>
    </location>
</feature>
<feature type="strand" evidence="15">
    <location>
        <begin position="323"/>
        <end position="325"/>
    </location>
</feature>
<feature type="turn" evidence="15">
    <location>
        <begin position="327"/>
        <end position="329"/>
    </location>
</feature>
<feature type="helix" evidence="15">
    <location>
        <begin position="338"/>
        <end position="340"/>
    </location>
</feature>
<feature type="strand" evidence="16">
    <location>
        <begin position="341"/>
        <end position="344"/>
    </location>
</feature>
<feature type="strand" evidence="15">
    <location>
        <begin position="346"/>
        <end position="348"/>
    </location>
</feature>
<feature type="strand" evidence="15">
    <location>
        <begin position="359"/>
        <end position="367"/>
    </location>
</feature>
<feature type="helix" evidence="15">
    <location>
        <begin position="370"/>
        <end position="373"/>
    </location>
</feature>
<feature type="helix" evidence="15">
    <location>
        <begin position="376"/>
        <end position="381"/>
    </location>
</feature>
<feature type="strand" evidence="15">
    <location>
        <begin position="386"/>
        <end position="398"/>
    </location>
</feature>
<feature type="strand" evidence="15">
    <location>
        <begin position="400"/>
        <end position="412"/>
    </location>
</feature>
<proteinExistence type="evidence at protein level"/>
<keyword id="KW-0002">3D-structure</keyword>
<keyword id="KW-0186">Copper</keyword>
<keyword id="KW-0903">Direct protein sequencing</keyword>
<keyword id="KW-0472">Membrane</keyword>
<keyword id="KW-0479">Metal-binding</keyword>
<keyword id="KW-0503">Monooxygenase</keyword>
<keyword id="KW-0520">NAD</keyword>
<keyword id="KW-0560">Oxidoreductase</keyword>
<keyword id="KW-1185">Reference proteome</keyword>
<keyword id="KW-0732">Signal</keyword>
<keyword id="KW-0812">Transmembrane</keyword>
<keyword id="KW-1133">Transmembrane helix</keyword>
<reference key="1">
    <citation type="journal article" date="1995" name="J. Bacteriol.">
        <title>Particulate methane monooxygenase genes in methanotrophs.</title>
        <authorList>
            <person name="Semrau J.D."/>
            <person name="Chistoserdov A."/>
            <person name="Lebron J."/>
            <person name="Costello A."/>
            <person name="Davagnino J."/>
            <person name="Kenna E."/>
            <person name="Holmes A.J."/>
            <person name="Finch R."/>
            <person name="Murrell J.C."/>
            <person name="Lidstrom M.E."/>
        </authorList>
    </citation>
    <scope>NUCLEOTIDE SEQUENCE [GENOMIC DNA]</scope>
    <scope>PROTEIN SEQUENCE OF 33-52</scope>
    <source>
        <strain>ATCC 33009 / NCIMB 11132 / Bath</strain>
    </source>
</reference>
<reference key="2">
    <citation type="journal article" date="1999" name="Microbiology">
        <title>Role of multiple gene copies in particulate methane monooxygenase activity in the methane-oxidizing bacterium Methylococcus capsulatus Bath.</title>
        <authorList>
            <person name="Stolyar S."/>
            <person name="Costello A.M."/>
            <person name="Peeples T.L."/>
            <person name="Lidstrom M.E."/>
        </authorList>
    </citation>
    <scope>NUCLEOTIDE SEQUENCE [GENOMIC DNA]</scope>
    <scope>FUNCTION</scope>
    <source>
        <strain>ATCC 33009 / NCIMB 11132 / Bath</strain>
    </source>
</reference>
<reference key="3">
    <citation type="journal article" date="2004" name="PLoS Biol.">
        <title>Genomic insights into methanotrophy: the complete genome sequence of Methylococcus capsulatus (Bath).</title>
        <authorList>
            <person name="Ward N.L."/>
            <person name="Larsen O."/>
            <person name="Sakwa J."/>
            <person name="Bruseth L."/>
            <person name="Khouri H.M."/>
            <person name="Durkin A.S."/>
            <person name="Dimitrov G."/>
            <person name="Jiang L."/>
            <person name="Scanlan D."/>
            <person name="Kang K.H."/>
            <person name="Lewis M.R."/>
            <person name="Nelson K.E."/>
            <person name="Methe B.A."/>
            <person name="Wu M."/>
            <person name="Heidelberg J.F."/>
            <person name="Paulsen I.T."/>
            <person name="Fouts D.E."/>
            <person name="Ravel J."/>
            <person name="Tettelin H."/>
            <person name="Ren Q."/>
            <person name="Read T.D."/>
            <person name="DeBoy R.T."/>
            <person name="Seshadri R."/>
            <person name="Salzberg S.L."/>
            <person name="Jensen H.B."/>
            <person name="Birkeland N.K."/>
            <person name="Nelson W.C."/>
            <person name="Dodson R.J."/>
            <person name="Grindhaug S.H."/>
            <person name="Holt I.E."/>
            <person name="Eidhammer I."/>
            <person name="Jonasen I."/>
            <person name="Vanaken S."/>
            <person name="Utterback T.R."/>
            <person name="Feldblyum T.V."/>
            <person name="Fraser C.M."/>
            <person name="Lillehaug J.R."/>
            <person name="Eisen J.A."/>
        </authorList>
    </citation>
    <scope>NUCLEOTIDE SEQUENCE [LARGE SCALE GENOMIC DNA]</scope>
    <source>
        <strain>ATCC 33009 / NCIMB 11132 / Bath</strain>
    </source>
</reference>
<reference key="4">
    <citation type="journal article" date="1998" name="J. Biol. Chem.">
        <title>The particulate methane monooxygenase from methylococcus capsulatus (Bath) is a novel copper-containing three-subunit enzyme. Isolation and characterization.</title>
        <authorList>
            <person name="Nguyen H.H."/>
            <person name="Elliott S.J."/>
            <person name="Yip J.H."/>
            <person name="Chan S.I."/>
        </authorList>
    </citation>
    <scope>PROTEIN SEQUENCE OF 33-65</scope>
    <scope>SUBUNIT</scope>
</reference>
<reference key="5">
    <citation type="journal article" date="1995" name="Arch. Biochem. Biophys.">
        <title>Detergent solubilization of membrane-bound methane monooxygenase requires plastoquinol analogs as electron donors.</title>
        <authorList>
            <person name="Shiemke A.K."/>
            <person name="Cook S.A."/>
            <person name="Miley T."/>
            <person name="Singleton P."/>
        </authorList>
    </citation>
    <scope>CATALYTIC ACTIVITY</scope>
    <scope>BIOPHYSICOCHEMICAL PROPERTIES</scope>
</reference>
<reference key="6">
    <citation type="journal article" date="2003" name="Biochem. J.">
        <title>The membrane-associated form of methane mono-oxygenase from Methylococcus capsulatus (Bath) is a copper/iron protein.</title>
        <authorList>
            <person name="Basu P."/>
            <person name="Katterle B."/>
            <person name="Andersson K.K."/>
            <person name="Dalton H."/>
        </authorList>
    </citation>
    <scope>SUBCELLULAR LOCATION</scope>
    <scope>SUBUNIT</scope>
    <scope>COFACTOR</scope>
</reference>
<reference key="7">
    <citation type="journal article" date="2005" name="Biochemistry">
        <title>Characterization and structural analysis of an active particulate methane monooxygenase trimer from Methylococcus capsulatus (Bath).</title>
        <authorList>
            <person name="Kitmitto A."/>
            <person name="Myronova N."/>
            <person name="Basu P."/>
            <person name="Dalton H."/>
        </authorList>
    </citation>
    <scope>ELECTRON MICROSCOPY</scope>
    <scope>SUBUNIT</scope>
</reference>
<reference key="8">
    <citation type="journal article" date="2006" name="Biochemistry">
        <title>Three-dimensional structure determination of a protein supercomplex that oxidizes methane to formaldehyde in Methylococcus capsulatus (Bath).</title>
        <authorList>
            <person name="Myronova N."/>
            <person name="Kitmitto A."/>
            <person name="Collins R.F."/>
            <person name="Miyaji A."/>
            <person name="Dalton H."/>
        </authorList>
    </citation>
    <scope>FUNCTION</scope>
    <scope>CRYOELECTRON MICROSCOPY</scope>
    <scope>SUBUNIT</scope>
</reference>
<reference key="9">
    <citation type="journal article" date="2010" name="Nature">
        <title>Oxidation of methane by a biological dicopper centre.</title>
        <authorList>
            <person name="Balasubramanian R."/>
            <person name="Smith S.M."/>
            <person name="Rawat S."/>
            <person name="Yatsunyk L.A."/>
            <person name="Stemmler T.L."/>
            <person name="Rosenzweig A.C."/>
        </authorList>
    </citation>
    <scope>FUNCTION</scope>
    <scope>MUTAGENESIS OF HIS-48; HIS-137 AND HIS-139</scope>
</reference>
<reference key="10">
    <citation type="journal article" date="2005" name="Nature">
        <title>Crystal structure of a membrane-bound metalloenzyme that catalyses the biological oxidation of methane.</title>
        <authorList>
            <person name="Lieberman R.L."/>
            <person name="Rosenzweig A.C."/>
        </authorList>
    </citation>
    <scope>X-RAY CRYSTALLOGRAPHY (2.80 ANGSTROMS) OF 33-414 IN COMPLEX WITH COPPER IONS</scope>
    <scope>SUBCELLULAR LOCATION</scope>
    <scope>SUBUNIT</scope>
    <scope>COFACTOR</scope>
</reference>
<reference key="11">
    <citation type="journal article" date="2011" name="Biochemistry">
        <title>Crystal structure and characterization of particulate methane monooxygenase from Methylocystis species strain M.</title>
        <authorList>
            <person name="Smith S.M."/>
            <person name="Rawat S."/>
            <person name="Telser J."/>
            <person name="Hoffman B.M."/>
            <person name="Stemmler T.L."/>
            <person name="Rosenzweig A.C."/>
        </authorList>
    </citation>
    <scope>X-RAY CRYSTALLOGRAPHY (2.80 ANGSTROMS) OF 33-414 IN COMPLEX WITH COPPER IONS</scope>
    <scope>SUBUNIT</scope>
    <scope>COFACTOR</scope>
</reference>
<name>PMOB_METCA</name>
<accession>G1UBD1</accession>
<accession>O08059</accession>
<accession>Q49104</accession>
<accession>Q607G4</accession>
<dbReference type="EC" id="1.14.18.3"/>
<dbReference type="EMBL" id="L40804">
    <property type="protein sequence ID" value="AAB49822.1"/>
    <property type="molecule type" value="Genomic_DNA"/>
</dbReference>
<dbReference type="EMBL" id="U94337">
    <property type="protein sequence ID" value="AAB51066.1"/>
    <property type="molecule type" value="Genomic_DNA"/>
</dbReference>
<dbReference type="EMBL" id="AE017282">
    <property type="protein sequence ID" value="AAU91115.1"/>
    <property type="molecule type" value="Genomic_DNA"/>
</dbReference>
<dbReference type="EMBL" id="AE017282">
    <property type="protein sequence ID" value="AAU92191.1"/>
    <property type="molecule type" value="Genomic_DNA"/>
</dbReference>
<dbReference type="PIR" id="B57266">
    <property type="entry name" value="B57266"/>
</dbReference>
<dbReference type="PDB" id="1YEW">
    <property type="method" value="X-ray"/>
    <property type="resolution" value="2.80 A"/>
    <property type="chains" value="A/E/I=33-414"/>
</dbReference>
<dbReference type="PDB" id="3RGB">
    <property type="method" value="X-ray"/>
    <property type="resolution" value="2.80 A"/>
    <property type="chains" value="A/E/I=1-414"/>
</dbReference>
<dbReference type="PDB" id="7EV9">
    <property type="method" value="EM"/>
    <property type="resolution" value="2.60 A"/>
    <property type="chains" value="A/E/I=1-414"/>
</dbReference>
<dbReference type="PDB" id="7S4H">
    <property type="method" value="EM"/>
    <property type="resolution" value="2.14 A"/>
    <property type="chains" value="A/E/I=1-414"/>
</dbReference>
<dbReference type="PDB" id="7S4I">
    <property type="method" value="EM"/>
    <property type="resolution" value="2.26 A"/>
    <property type="chains" value="A/E/I=1-414"/>
</dbReference>
<dbReference type="PDB" id="7S4J">
    <property type="method" value="EM"/>
    <property type="resolution" value="2.16 A"/>
    <property type="chains" value="A/E/I=1-414"/>
</dbReference>
<dbReference type="PDB" id="7S4K">
    <property type="method" value="EM"/>
    <property type="resolution" value="2.36 A"/>
    <property type="chains" value="A/E/I=1-414"/>
</dbReference>
<dbReference type="PDB" id="7T4O">
    <property type="method" value="EM"/>
    <property type="resolution" value="3.65 A"/>
    <property type="chains" value="A/E/I=1-414"/>
</dbReference>
<dbReference type="PDB" id="7T4P">
    <property type="method" value="EM"/>
    <property type="resolution" value="3.62 A"/>
    <property type="chains" value="A/E/I=1-414"/>
</dbReference>
<dbReference type="PDB" id="7YZY">
    <property type="method" value="EM"/>
    <property type="resolution" value="4.80 A"/>
    <property type="chains" value="A/E/I=1-414"/>
</dbReference>
<dbReference type="PDB" id="8OYI">
    <property type="method" value="EM"/>
    <property type="resolution" value="2.19 A"/>
    <property type="chains" value="A/E/I=1-414"/>
</dbReference>
<dbReference type="PDB" id="8SQW">
    <property type="method" value="EM"/>
    <property type="resolution" value="2.16 A"/>
    <property type="chains" value="A/E/I=33-414"/>
</dbReference>
<dbReference type="PDB" id="8SR1">
    <property type="method" value="EM"/>
    <property type="resolution" value="2.18 A"/>
    <property type="chains" value="A/E/I=33-414"/>
</dbReference>
<dbReference type="PDB" id="8SR2">
    <property type="method" value="EM"/>
    <property type="resolution" value="2.36 A"/>
    <property type="chains" value="A/E/I=1-414"/>
</dbReference>
<dbReference type="PDB" id="8SR4">
    <property type="method" value="EM"/>
    <property type="resolution" value="3.12 A"/>
    <property type="chains" value="A/E/I=33-414"/>
</dbReference>
<dbReference type="PDB" id="8SR5">
    <property type="method" value="EM"/>
    <property type="resolution" value="3.22 A"/>
    <property type="chains" value="A/E/I=1-414"/>
</dbReference>
<dbReference type="PDB" id="9CL1">
    <property type="method" value="EM"/>
    <property type="resolution" value="2.89 A"/>
    <property type="chains" value="Aa/Ab/Ac=33-414"/>
</dbReference>
<dbReference type="PDB" id="9CL2">
    <property type="method" value="EM"/>
    <property type="resolution" value="2.42 A"/>
    <property type="chains" value="Aa/Ab/Ac=33-414"/>
</dbReference>
<dbReference type="PDB" id="9CL3">
    <property type="method" value="EM"/>
    <property type="resolution" value="2.59 A"/>
    <property type="chains" value="Aa/Ab/Ac=33-414"/>
</dbReference>
<dbReference type="PDB" id="9CL4">
    <property type="method" value="EM"/>
    <property type="resolution" value="2.61 A"/>
    <property type="chains" value="Aa/Ab/Ac=33-414"/>
</dbReference>
<dbReference type="PDBsum" id="1YEW"/>
<dbReference type="PDBsum" id="3RGB"/>
<dbReference type="PDBsum" id="7EV9"/>
<dbReference type="PDBsum" id="7S4H"/>
<dbReference type="PDBsum" id="7S4I"/>
<dbReference type="PDBsum" id="7S4J"/>
<dbReference type="PDBsum" id="7S4K"/>
<dbReference type="PDBsum" id="7T4O"/>
<dbReference type="PDBsum" id="7T4P"/>
<dbReference type="PDBsum" id="7YZY"/>
<dbReference type="PDBsum" id="8OYI"/>
<dbReference type="PDBsum" id="8SQW"/>
<dbReference type="PDBsum" id="8SR1"/>
<dbReference type="PDBsum" id="8SR2"/>
<dbReference type="PDBsum" id="8SR4"/>
<dbReference type="PDBsum" id="8SR5"/>
<dbReference type="PDBsum" id="9CL1"/>
<dbReference type="PDBsum" id="9CL2"/>
<dbReference type="PDBsum" id="9CL3"/>
<dbReference type="PDBsum" id="9CL4"/>
<dbReference type="EMDB" id="EMD-14399"/>
<dbReference type="EMDB" id="EMD-17287"/>
<dbReference type="EMDB" id="EMD-24826"/>
<dbReference type="EMDB" id="EMD-24827"/>
<dbReference type="EMDB" id="EMD-24828"/>
<dbReference type="EMDB" id="EMD-24829"/>
<dbReference type="EMDB" id="EMD-25683"/>
<dbReference type="EMDB" id="EMD-25684"/>
<dbReference type="EMDB" id="EMD-31325"/>
<dbReference type="EMDB" id="EMD-40714"/>
<dbReference type="EMDB" id="EMD-40717"/>
<dbReference type="EMDB" id="EMD-40718"/>
<dbReference type="EMDB" id="EMD-40719"/>
<dbReference type="EMDB" id="EMD-40720"/>
<dbReference type="EMDB" id="EMD-45658"/>
<dbReference type="EMDB" id="EMD-45659"/>
<dbReference type="EMDB" id="EMD-45660"/>
<dbReference type="EMDB" id="EMD-45661"/>
<dbReference type="SMR" id="G1UBD1"/>
<dbReference type="STRING" id="243233.MCA1796"/>
<dbReference type="TCDB" id="9.B.280.1.2">
    <property type="family name" value="the particulate methane monooxygenase (pmmo) family"/>
</dbReference>
<dbReference type="GeneID" id="88225028"/>
<dbReference type="KEGG" id="mca:MCA1796"/>
<dbReference type="KEGG" id="mca:MCA2853"/>
<dbReference type="eggNOG" id="ENOG502Z96N">
    <property type="taxonomic scope" value="Bacteria"/>
</dbReference>
<dbReference type="HOGENOM" id="CLU_660275_0_0_6"/>
<dbReference type="BioCyc" id="MetaCyc:MONOMER-3882"/>
<dbReference type="BRENDA" id="1.14.18.3">
    <property type="organism ID" value="3305"/>
</dbReference>
<dbReference type="EvolutionaryTrace" id="G1UBD1"/>
<dbReference type="Proteomes" id="UP000006821">
    <property type="component" value="Chromosome"/>
</dbReference>
<dbReference type="GO" id="GO:0016020">
    <property type="term" value="C:membrane"/>
    <property type="evidence" value="ECO:0007669"/>
    <property type="project" value="UniProtKB-SubCell"/>
</dbReference>
<dbReference type="GO" id="GO:0046872">
    <property type="term" value="F:metal ion binding"/>
    <property type="evidence" value="ECO:0007669"/>
    <property type="project" value="UniProtKB-KW"/>
</dbReference>
<dbReference type="GO" id="GO:0004497">
    <property type="term" value="F:monooxygenase activity"/>
    <property type="evidence" value="ECO:0007669"/>
    <property type="project" value="UniProtKB-KW"/>
</dbReference>
<dbReference type="Gene3D" id="1.10.287.710">
    <property type="entry name" value="Helix hairpin bin"/>
    <property type="match status" value="1"/>
</dbReference>
<dbReference type="Gene3D" id="2.60.120.570">
    <property type="entry name" value="Particulate methane monooxygenase, b subunit. Chain: A, domain 1"/>
    <property type="match status" value="1"/>
</dbReference>
<dbReference type="Gene3D" id="2.60.40.1580">
    <property type="entry name" value="Particulate methane monooxygenase, b subunit. Chain: A, domain 3"/>
    <property type="match status" value="1"/>
</dbReference>
<dbReference type="InterPro" id="IPR006833">
    <property type="entry name" value="NH3_CH4_mOase_B"/>
</dbReference>
<dbReference type="InterPro" id="IPR023303">
    <property type="entry name" value="NH3_CH4_mOase_suB_C"/>
</dbReference>
<dbReference type="InterPro" id="IPR023141">
    <property type="entry name" value="NH3_CH4_mOase_suB_hlx_hairpin"/>
</dbReference>
<dbReference type="InterPro" id="IPR023301">
    <property type="entry name" value="NH3_CH4_mOase_suB_N"/>
</dbReference>
<dbReference type="NCBIfam" id="NF041640">
    <property type="entry name" value="AmoB_BACT"/>
    <property type="match status" value="1"/>
</dbReference>
<dbReference type="NCBIfam" id="TIGR03079">
    <property type="entry name" value="CH4_NH3mon_ox_B"/>
    <property type="match status" value="1"/>
</dbReference>
<dbReference type="Pfam" id="PF04744">
    <property type="entry name" value="Monooxygenase_B"/>
    <property type="match status" value="1"/>
</dbReference>
<sequence>MKTIKDRIAKWSAIGLLSAVAATAFYAPSASAHGEKSQAAFMRMRTIHWYDLSWSKEKVKINETVEIKGKFHVFEGWPETVDEPDVAFLNVGMPGPVFIRKESYIGGQLVPRSVRLEIGKTYDFRVVLKARRPGDWHVHTMMNVQGGGPIIGPGKWITVEGSMSEFRNPVTTLTGQTVDLENYNEGNTYFWHAFWFAIGVAWIGYWSRRPIFIPRLLMVDAGRADELVSATDRKVAMGFLAATILIVVMAMSSANSKYPITIPLQAGTMRGMKPLELPAPTVSVKVEDATYRVPGRAMRMKLTITNHGNSPIRLGEFYTASVRFLDSDVYKDTTGYPEDLLAEDGLSVSDNSPLAPGETRTVDVTASDAAWEVYRLSDIIYDPDSRFAGLLFFFDATGNRQVVQIDAPLIPSFM</sequence>
<comment type="function">
    <text evidence="2 6 7">Methane monooxygenase is responsible for the initial oxygenation of methane to methanol in methanotrophs. At least in vitro, specific quinols can replace NADH as reductants.</text>
</comment>
<comment type="catalytic activity">
    <reaction evidence="9">
        <text>methane + a quinol + O2 = methanol + a quinone + H2O</text>
        <dbReference type="Rhea" id="RHEA:30355"/>
        <dbReference type="ChEBI" id="CHEBI:15377"/>
        <dbReference type="ChEBI" id="CHEBI:15379"/>
        <dbReference type="ChEBI" id="CHEBI:16183"/>
        <dbReference type="ChEBI" id="CHEBI:17790"/>
        <dbReference type="ChEBI" id="CHEBI:24646"/>
        <dbReference type="ChEBI" id="CHEBI:132124"/>
        <dbReference type="EC" id="1.14.18.3"/>
    </reaction>
</comment>
<comment type="cofactor">
    <cofactor evidence="3 4 8">
        <name>Cu(2+)</name>
        <dbReference type="ChEBI" id="CHEBI:29036"/>
    </cofactor>
    <text evidence="3 4 8">Binds 3 copper ions per subunit. Two of these (copper ion 1 and 3) form a binuclear cluster.</text>
</comment>
<comment type="biophysicochemical properties">
    <kinetics>
        <Vmax evidence="9">24.2 nmol/min/mg enzyme (with NADH as reductant)</Vmax>
        <Vmax evidence="9">4.4 nmol/min/mg enzyme (with decyl-plastoquinol as reductant)</Vmax>
        <Vmax evidence="9">2.9 nmol/min/mg enzyme (with duroquinol as reductant)</Vmax>
        <text>Kinetic parameters have been established with the pMMO heteromeric complex.</text>
    </kinetics>
</comment>
<comment type="subunit">
    <text evidence="3 4 5 6 8 11">M.capsulatus has two forms of methane monooxygenase, a soluble (sMMO) and a membrane-bound (particulate) type (pMMO). The particulate type is a nonamer composed of three alpha:beta:gamma heterotrimeric protomers assembled into a cylindrical structure; the beta and gamma subunits comprise the bulk of the membrane-spanning regions and the soluble regions are derived primarily from alpha subunits which form two antiparallel beta-barrel-like structures each. This assembly, also called pMMO hydroxylase (pMMO-H), is proposed to associate with methanol dehydrogenase (MDH), also designated as pMMO-R, to form the pMMO-C complex which seems to have greater methane monooxygenase activity.</text>
</comment>
<comment type="subcellular location">
    <subcellularLocation>
        <location evidence="3 4">Membrane</location>
        <topology evidence="3 4">Multi-pass membrane protein</topology>
    </subcellularLocation>
    <text>Located in intracellular membranes.</text>
</comment>
<comment type="caution">
    <text evidence="12">A dicopper center located in the alpha/pmoB subunit is proposed as active site, in part based on mutagenesis studies using a soluble pmoB construct in which its two cupredoxin domains have been artificially bridged. However, the construct has only 10% methane oxidation activity compared with the intact membrane-bound pMMO.</text>
</comment>